<name>DADA_ECO27</name>
<sequence>MRVVILGSGVVGVASAWYLNQAGHEVTVIDREPGAALETSAANAGQISPGYAAPWAAPGVPLKAIKWMFQRHAPLAVRLDGTQFQLKWMWQMLRNCDTSHYMENKGRMVRLAEYSRDCLKVLRAETNIQYEGRQGGTLQLFRTEQQYENATRDIAVLEDAGVPYQLLESSRLAEVEPALAEVAHKLTGGLQLPNDETGDCQLFTQNLARMAEQAGVKFHFNTPVDQLLCDGEQIYGVKCGDEVIKADAYVMAFGSYSTAMLKGIVDIPVYPLKGYSLTIPIAQEDGAPVSTILDETYKIAITRFDNRIRVGGMAEIVGFNTELLQPRRETLEMVVRDLYPRGGHVEQATFWTGLRPMTPDGTPVVGRTRFKNLWLNTGHGTLGWTMACGSSQLLSDLLSGRTPAIPYEDLSVARYSRGFTPSRPGHLHGAHS</sequence>
<organism>
    <name type="scientific">Escherichia coli O127:H6 (strain E2348/69 / EPEC)</name>
    <dbReference type="NCBI Taxonomy" id="574521"/>
    <lineage>
        <taxon>Bacteria</taxon>
        <taxon>Pseudomonadati</taxon>
        <taxon>Pseudomonadota</taxon>
        <taxon>Gammaproteobacteria</taxon>
        <taxon>Enterobacterales</taxon>
        <taxon>Enterobacteriaceae</taxon>
        <taxon>Escherichia</taxon>
    </lineage>
</organism>
<protein>
    <recommendedName>
        <fullName evidence="1">D-amino acid dehydrogenase</fullName>
        <ecNumber evidence="1">1.4.99.-</ecNumber>
    </recommendedName>
</protein>
<evidence type="ECO:0000255" key="1">
    <source>
        <dbReference type="HAMAP-Rule" id="MF_01202"/>
    </source>
</evidence>
<gene>
    <name evidence="1" type="primary">dadA</name>
    <name type="ordered locus">E2348C_1308</name>
</gene>
<keyword id="KW-0274">FAD</keyword>
<keyword id="KW-0285">Flavoprotein</keyword>
<keyword id="KW-0560">Oxidoreductase</keyword>
<keyword id="KW-1185">Reference proteome</keyword>
<comment type="function">
    <text evidence="1">Oxidative deamination of D-amino acids.</text>
</comment>
<comment type="catalytic activity">
    <reaction evidence="1">
        <text>a D-alpha-amino acid + A + H2O = a 2-oxocarboxylate + AH2 + NH4(+)</text>
        <dbReference type="Rhea" id="RHEA:18125"/>
        <dbReference type="ChEBI" id="CHEBI:13193"/>
        <dbReference type="ChEBI" id="CHEBI:15377"/>
        <dbReference type="ChEBI" id="CHEBI:17499"/>
        <dbReference type="ChEBI" id="CHEBI:28938"/>
        <dbReference type="ChEBI" id="CHEBI:35179"/>
        <dbReference type="ChEBI" id="CHEBI:59871"/>
    </reaction>
</comment>
<comment type="cofactor">
    <cofactor evidence="1">
        <name>FAD</name>
        <dbReference type="ChEBI" id="CHEBI:57692"/>
    </cofactor>
</comment>
<comment type="pathway">
    <text>Amino-acid degradation; D-alanine degradation; NH(3) and pyruvate from D-alanine: step 1/1.</text>
</comment>
<comment type="similarity">
    <text evidence="1">Belongs to the DadA oxidoreductase family.</text>
</comment>
<dbReference type="EC" id="1.4.99.-" evidence="1"/>
<dbReference type="EMBL" id="FM180568">
    <property type="protein sequence ID" value="CAS08856.1"/>
    <property type="molecule type" value="Genomic_DNA"/>
</dbReference>
<dbReference type="RefSeq" id="WP_001266920.1">
    <property type="nucleotide sequence ID" value="NC_011601.1"/>
</dbReference>
<dbReference type="SMR" id="B7UQ73"/>
<dbReference type="KEGG" id="ecg:E2348C_1308"/>
<dbReference type="HOGENOM" id="CLU_007884_9_2_6"/>
<dbReference type="UniPathway" id="UPA00043">
    <property type="reaction ID" value="UER00498"/>
</dbReference>
<dbReference type="Proteomes" id="UP000008205">
    <property type="component" value="Chromosome"/>
</dbReference>
<dbReference type="GO" id="GO:0005737">
    <property type="term" value="C:cytoplasm"/>
    <property type="evidence" value="ECO:0007669"/>
    <property type="project" value="TreeGrafter"/>
</dbReference>
<dbReference type="GO" id="GO:0005886">
    <property type="term" value="C:plasma membrane"/>
    <property type="evidence" value="ECO:0007669"/>
    <property type="project" value="TreeGrafter"/>
</dbReference>
<dbReference type="GO" id="GO:0008718">
    <property type="term" value="F:D-amino-acid dehydrogenase activity"/>
    <property type="evidence" value="ECO:0007669"/>
    <property type="project" value="UniProtKB-UniRule"/>
</dbReference>
<dbReference type="GO" id="GO:0055130">
    <property type="term" value="P:D-alanine catabolic process"/>
    <property type="evidence" value="ECO:0007669"/>
    <property type="project" value="UniProtKB-UniPathway"/>
</dbReference>
<dbReference type="FunFam" id="3.50.50.60:FF:000020">
    <property type="entry name" value="D-amino acid dehydrogenase"/>
    <property type="match status" value="1"/>
</dbReference>
<dbReference type="Gene3D" id="3.30.9.10">
    <property type="entry name" value="D-Amino Acid Oxidase, subunit A, domain 2"/>
    <property type="match status" value="1"/>
</dbReference>
<dbReference type="Gene3D" id="3.50.50.60">
    <property type="entry name" value="FAD/NAD(P)-binding domain"/>
    <property type="match status" value="2"/>
</dbReference>
<dbReference type="HAMAP" id="MF_01202">
    <property type="entry name" value="DadA"/>
    <property type="match status" value="1"/>
</dbReference>
<dbReference type="InterPro" id="IPR023080">
    <property type="entry name" value="DadA"/>
</dbReference>
<dbReference type="InterPro" id="IPR006076">
    <property type="entry name" value="FAD-dep_OxRdtase"/>
</dbReference>
<dbReference type="InterPro" id="IPR036188">
    <property type="entry name" value="FAD/NAD-bd_sf"/>
</dbReference>
<dbReference type="NCBIfam" id="NF001933">
    <property type="entry name" value="PRK00711.1"/>
    <property type="match status" value="1"/>
</dbReference>
<dbReference type="PANTHER" id="PTHR13847:SF280">
    <property type="entry name" value="D-AMINO ACID DEHYDROGENASE"/>
    <property type="match status" value="1"/>
</dbReference>
<dbReference type="PANTHER" id="PTHR13847">
    <property type="entry name" value="SARCOSINE DEHYDROGENASE-RELATED"/>
    <property type="match status" value="1"/>
</dbReference>
<dbReference type="Pfam" id="PF01266">
    <property type="entry name" value="DAO"/>
    <property type="match status" value="1"/>
</dbReference>
<dbReference type="SUPFAM" id="SSF54373">
    <property type="entry name" value="FAD-linked reductases, C-terminal domain"/>
    <property type="match status" value="1"/>
</dbReference>
<dbReference type="SUPFAM" id="SSF51905">
    <property type="entry name" value="FAD/NAD(P)-binding domain"/>
    <property type="match status" value="1"/>
</dbReference>
<accession>B7UQ73</accession>
<reference key="1">
    <citation type="journal article" date="2009" name="J. Bacteriol.">
        <title>Complete genome sequence and comparative genome analysis of enteropathogenic Escherichia coli O127:H6 strain E2348/69.</title>
        <authorList>
            <person name="Iguchi A."/>
            <person name="Thomson N.R."/>
            <person name="Ogura Y."/>
            <person name="Saunders D."/>
            <person name="Ooka T."/>
            <person name="Henderson I.R."/>
            <person name="Harris D."/>
            <person name="Asadulghani M."/>
            <person name="Kurokawa K."/>
            <person name="Dean P."/>
            <person name="Kenny B."/>
            <person name="Quail M.A."/>
            <person name="Thurston S."/>
            <person name="Dougan G."/>
            <person name="Hayashi T."/>
            <person name="Parkhill J."/>
            <person name="Frankel G."/>
        </authorList>
    </citation>
    <scope>NUCLEOTIDE SEQUENCE [LARGE SCALE GENOMIC DNA]</scope>
    <source>
        <strain>E2348/69 / EPEC</strain>
    </source>
</reference>
<proteinExistence type="inferred from homology"/>
<feature type="chain" id="PRO_1000164639" description="D-amino acid dehydrogenase">
    <location>
        <begin position="1"/>
        <end position="432"/>
    </location>
</feature>
<feature type="binding site" evidence="1">
    <location>
        <begin position="3"/>
        <end position="17"/>
    </location>
    <ligand>
        <name>FAD</name>
        <dbReference type="ChEBI" id="CHEBI:57692"/>
    </ligand>
</feature>